<feature type="chain" id="PRO_0000057790" description="Phosphoserine phosphatase RsbU">
    <location>
        <begin position="1"/>
        <end position="335"/>
    </location>
</feature>
<feature type="domain" description="PPM-type phosphatase" evidence="1">
    <location>
        <begin position="123"/>
        <end position="333"/>
    </location>
</feature>
<feature type="sequence conflict" description="In Ref. 1." evidence="4" ref="1">
    <original>H</original>
    <variation>Q</variation>
    <location>
        <position position="323"/>
    </location>
</feature>
<feature type="helix" evidence="5">
    <location>
        <begin position="2"/>
        <end position="21"/>
    </location>
</feature>
<feature type="helix" evidence="5">
    <location>
        <begin position="24"/>
        <end position="39"/>
    </location>
</feature>
<feature type="helix" evidence="5">
    <location>
        <begin position="44"/>
        <end position="58"/>
    </location>
</feature>
<feature type="helix" evidence="5">
    <location>
        <begin position="64"/>
        <end position="83"/>
    </location>
</feature>
<name>RSBU_BACSU</name>
<organism>
    <name type="scientific">Bacillus subtilis (strain 168)</name>
    <dbReference type="NCBI Taxonomy" id="224308"/>
    <lineage>
        <taxon>Bacteria</taxon>
        <taxon>Bacillati</taxon>
        <taxon>Bacillota</taxon>
        <taxon>Bacilli</taxon>
        <taxon>Bacillales</taxon>
        <taxon>Bacillaceae</taxon>
        <taxon>Bacillus</taxon>
    </lineage>
</organism>
<accession>P40399</accession>
<sequence length="335" mass="38631">MDFREVIEQRYHQLLSRYIAELTETSLYQAQKFSRKTIEHQIPPEEIISIHRKVLKELYPSLPEDVFHSLDFLIEVMIGYGMAYQEHQTLRGIQQEIKSEIEIAANVQQTLLGTKVPQEEALDIGAISVPAKQMSGDYYHFVKDKESINIAIADVIGKGIPAALCMSMIKYAMDSLPETGIHPSQVLKNLNRVVEQNVDASMFITMFYANYNMDKHQFTYASAGHEPGFYYSQKDNTFYDLEAKGLVLGISQDYDYKQFDQHLEKGDMIVLFSDGVTECRTENGFLERPDLQKLIEEHMCSSAQEMVKNIYDSLLKLQDFQLHDDFTLIVLRRKV</sequence>
<protein>
    <recommendedName>
        <fullName>Phosphoserine phosphatase RsbU</fullName>
        <ecNumber>3.1.3.3</ecNumber>
    </recommendedName>
    <alternativeName>
        <fullName>Sigma factor SigB regulation protein RsbU</fullName>
    </alternativeName>
</protein>
<proteinExistence type="evidence at protein level"/>
<keyword id="KW-0002">3D-structure</keyword>
<keyword id="KW-0903">Direct protein sequencing</keyword>
<keyword id="KW-0378">Hydrolase</keyword>
<keyword id="KW-0904">Protein phosphatase</keyword>
<keyword id="KW-1185">Reference proteome</keyword>
<evidence type="ECO:0000255" key="1">
    <source>
        <dbReference type="PROSITE-ProRule" id="PRU01082"/>
    </source>
</evidence>
<evidence type="ECO:0000269" key="2">
    <source>
    </source>
</evidence>
<evidence type="ECO:0000269" key="3">
    <source>
    </source>
</evidence>
<evidence type="ECO:0000305" key="4"/>
<evidence type="ECO:0007829" key="5">
    <source>
        <dbReference type="PDB" id="1W53"/>
    </source>
</evidence>
<reference key="1">
    <citation type="journal article" date="1995" name="J. Bacteriol.">
        <title>Four additional genes in the sigB operon of Bacillus subtilis that control activity of the general stress factor sigma B in response to environmental signals.</title>
        <authorList>
            <person name="Wise A.A."/>
            <person name="Price C.W."/>
        </authorList>
    </citation>
    <scope>NUCLEOTIDE SEQUENCE [GENOMIC DNA]</scope>
    <source>
        <strain>168 / Marburg / ATCC 6051 / DSM 10 / JCM 1465 / NBRC 13719 / NCIMB 3610 / NRRL NRS-744 / VKM B-501</strain>
    </source>
</reference>
<reference key="2">
    <citation type="journal article" date="1995" name="J. Bacteriol.">
        <title>The Bacillus subtilis rsbU gene product is necessary for RsbX-dependent regulation of sigma B.</title>
        <authorList>
            <person name="Voelker U."/>
            <person name="Dufour A."/>
            <person name="Haldenwang W.G."/>
        </authorList>
    </citation>
    <scope>NUCLEOTIDE SEQUENCE [GENOMIC DNA]</scope>
    <source>
        <strain>168 / BSA46</strain>
    </source>
</reference>
<reference key="3">
    <citation type="submission" date="1997-03" db="EMBL/GenBank/DDBJ databases">
        <title>A 148 kbp sequence of the region between 35 and 47 degree of the Bacillus subtilis genome.</title>
        <authorList>
            <person name="Kasahara Y."/>
            <person name="Nakai S."/>
            <person name="Lee S."/>
            <person name="Sadaie Y."/>
            <person name="Ogasawara N."/>
        </authorList>
    </citation>
    <scope>NUCLEOTIDE SEQUENCE [GENOMIC DNA]</scope>
    <source>
        <strain>168</strain>
    </source>
</reference>
<reference key="4">
    <citation type="journal article" date="1997" name="Nature">
        <title>The complete genome sequence of the Gram-positive bacterium Bacillus subtilis.</title>
        <authorList>
            <person name="Kunst F."/>
            <person name="Ogasawara N."/>
            <person name="Moszer I."/>
            <person name="Albertini A.M."/>
            <person name="Alloni G."/>
            <person name="Azevedo V."/>
            <person name="Bertero M.G."/>
            <person name="Bessieres P."/>
            <person name="Bolotin A."/>
            <person name="Borchert S."/>
            <person name="Borriss R."/>
            <person name="Boursier L."/>
            <person name="Brans A."/>
            <person name="Braun M."/>
            <person name="Brignell S.C."/>
            <person name="Bron S."/>
            <person name="Brouillet S."/>
            <person name="Bruschi C.V."/>
            <person name="Caldwell B."/>
            <person name="Capuano V."/>
            <person name="Carter N.M."/>
            <person name="Choi S.-K."/>
            <person name="Codani J.-J."/>
            <person name="Connerton I.F."/>
            <person name="Cummings N.J."/>
            <person name="Daniel R.A."/>
            <person name="Denizot F."/>
            <person name="Devine K.M."/>
            <person name="Duesterhoeft A."/>
            <person name="Ehrlich S.D."/>
            <person name="Emmerson P.T."/>
            <person name="Entian K.-D."/>
            <person name="Errington J."/>
            <person name="Fabret C."/>
            <person name="Ferrari E."/>
            <person name="Foulger D."/>
            <person name="Fritz C."/>
            <person name="Fujita M."/>
            <person name="Fujita Y."/>
            <person name="Fuma S."/>
            <person name="Galizzi A."/>
            <person name="Galleron N."/>
            <person name="Ghim S.-Y."/>
            <person name="Glaser P."/>
            <person name="Goffeau A."/>
            <person name="Golightly E.J."/>
            <person name="Grandi G."/>
            <person name="Guiseppi G."/>
            <person name="Guy B.J."/>
            <person name="Haga K."/>
            <person name="Haiech J."/>
            <person name="Harwood C.R."/>
            <person name="Henaut A."/>
            <person name="Hilbert H."/>
            <person name="Holsappel S."/>
            <person name="Hosono S."/>
            <person name="Hullo M.-F."/>
            <person name="Itaya M."/>
            <person name="Jones L.-M."/>
            <person name="Joris B."/>
            <person name="Karamata D."/>
            <person name="Kasahara Y."/>
            <person name="Klaerr-Blanchard M."/>
            <person name="Klein C."/>
            <person name="Kobayashi Y."/>
            <person name="Koetter P."/>
            <person name="Koningstein G."/>
            <person name="Krogh S."/>
            <person name="Kumano M."/>
            <person name="Kurita K."/>
            <person name="Lapidus A."/>
            <person name="Lardinois S."/>
            <person name="Lauber J."/>
            <person name="Lazarevic V."/>
            <person name="Lee S.-M."/>
            <person name="Levine A."/>
            <person name="Liu H."/>
            <person name="Masuda S."/>
            <person name="Mauel C."/>
            <person name="Medigue C."/>
            <person name="Medina N."/>
            <person name="Mellado R.P."/>
            <person name="Mizuno M."/>
            <person name="Moestl D."/>
            <person name="Nakai S."/>
            <person name="Noback M."/>
            <person name="Noone D."/>
            <person name="O'Reilly M."/>
            <person name="Ogawa K."/>
            <person name="Ogiwara A."/>
            <person name="Oudega B."/>
            <person name="Park S.-H."/>
            <person name="Parro V."/>
            <person name="Pohl T.M."/>
            <person name="Portetelle D."/>
            <person name="Porwollik S."/>
            <person name="Prescott A.M."/>
            <person name="Presecan E."/>
            <person name="Pujic P."/>
            <person name="Purnelle B."/>
            <person name="Rapoport G."/>
            <person name="Rey M."/>
            <person name="Reynolds S."/>
            <person name="Rieger M."/>
            <person name="Rivolta C."/>
            <person name="Rocha E."/>
            <person name="Roche B."/>
            <person name="Rose M."/>
            <person name="Sadaie Y."/>
            <person name="Sato T."/>
            <person name="Scanlan E."/>
            <person name="Schleich S."/>
            <person name="Schroeter R."/>
            <person name="Scoffone F."/>
            <person name="Sekiguchi J."/>
            <person name="Sekowska A."/>
            <person name="Seror S.J."/>
            <person name="Serror P."/>
            <person name="Shin B.-S."/>
            <person name="Soldo B."/>
            <person name="Sorokin A."/>
            <person name="Tacconi E."/>
            <person name="Takagi T."/>
            <person name="Takahashi H."/>
            <person name="Takemaru K."/>
            <person name="Takeuchi M."/>
            <person name="Tamakoshi A."/>
            <person name="Tanaka T."/>
            <person name="Terpstra P."/>
            <person name="Tognoni A."/>
            <person name="Tosato V."/>
            <person name="Uchiyama S."/>
            <person name="Vandenbol M."/>
            <person name="Vannier F."/>
            <person name="Vassarotti A."/>
            <person name="Viari A."/>
            <person name="Wambutt R."/>
            <person name="Wedler E."/>
            <person name="Wedler H."/>
            <person name="Weitzenegger T."/>
            <person name="Winters P."/>
            <person name="Wipat A."/>
            <person name="Yamamoto H."/>
            <person name="Yamane K."/>
            <person name="Yasumoto K."/>
            <person name="Yata K."/>
            <person name="Yoshida K."/>
            <person name="Yoshikawa H.-F."/>
            <person name="Zumstein E."/>
            <person name="Yoshikawa H."/>
            <person name="Danchin A."/>
        </authorList>
    </citation>
    <scope>NUCLEOTIDE SEQUENCE [LARGE SCALE GENOMIC DNA]</scope>
    <source>
        <strain>168</strain>
    </source>
</reference>
<reference key="5">
    <citation type="journal article" date="1996" name="Genes Dev.">
        <title>Opposing pairs of serine protein kinases and phosphatases transmit signals of environmental stress to activate a bacterial transcription factor.</title>
        <authorList>
            <person name="Yang X."/>
            <person name="Kang C.M."/>
            <person name="Brody M.S."/>
            <person name="Price C.W."/>
        </authorList>
    </citation>
    <scope>FUNCTION</scope>
    <source>
        <strain>168 / Marburg / ATCC 6051 / DSM 10 / JCM 1465 / NBRC 13719 / NCIMB 3610 / NRRL NRS-744 / VKM B-501</strain>
    </source>
</reference>
<reference key="6">
    <citation type="journal article" date="1998" name="Mol. Microbiol.">
        <title>Serine kinase activity of a Bacillus subtilis switch protein is required to transduce environmental stress signals but not to activate its target PP2C phosphatase.</title>
        <authorList>
            <person name="Kang C.M."/>
            <person name="Vijay K."/>
            <person name="Price C.W."/>
        </authorList>
    </citation>
    <scope>ACTIVITY REGULATION</scope>
    <source>
        <strain>168 / Marburg / ATCC 6051 / DSM 10 / JCM 1465 / NBRC 13719 / NCIMB 3610 / NRRL NRS-744 / VKM B-501</strain>
    </source>
</reference>
<reference key="7">
    <citation type="journal article" date="2003" name="Acta Crystallogr. D">
        <title>Crystallization and preliminary crystallographic analysis of the kinase-recruitment domain of the PP2C-type phosphatase RsbU.</title>
        <authorList>
            <person name="Dutta S."/>
            <person name="Lewis R.J."/>
        </authorList>
    </citation>
    <scope>CRYSTALLIZATION OF N-TERMINAL DOMAIN</scope>
    <scope>PROTEIN SEQUENCE OF 112-121</scope>
</reference>
<dbReference type="EC" id="3.1.3.3"/>
<dbReference type="EMBL" id="L35574">
    <property type="protein sequence ID" value="AAA85083.1"/>
    <property type="molecule type" value="Genomic_DNA"/>
</dbReference>
<dbReference type="EMBL" id="X81652">
    <property type="protein sequence ID" value="CAB57214.1"/>
    <property type="status" value="ALT_SEQ"/>
    <property type="molecule type" value="Genomic_DNA"/>
</dbReference>
<dbReference type="EMBL" id="AB001488">
    <property type="protein sequence ID" value="BAA19307.1"/>
    <property type="molecule type" value="Genomic_DNA"/>
</dbReference>
<dbReference type="EMBL" id="AL009126">
    <property type="protein sequence ID" value="CAB12277.1"/>
    <property type="molecule type" value="Genomic_DNA"/>
</dbReference>
<dbReference type="PIR" id="H69701">
    <property type="entry name" value="H69701"/>
</dbReference>
<dbReference type="RefSeq" id="NP_388351.1">
    <property type="nucleotide sequence ID" value="NC_000964.3"/>
</dbReference>
<dbReference type="RefSeq" id="WP_003234295.1">
    <property type="nucleotide sequence ID" value="NZ_OZ025638.1"/>
</dbReference>
<dbReference type="PDB" id="1W53">
    <property type="method" value="X-ray"/>
    <property type="resolution" value="1.60 A"/>
    <property type="chains" value="A=1-84"/>
</dbReference>
<dbReference type="PDB" id="2J6Y">
    <property type="method" value="X-ray"/>
    <property type="resolution" value="1.85 A"/>
    <property type="chains" value="A/B/C/D/E=1-111"/>
</dbReference>
<dbReference type="PDB" id="2J6Z">
    <property type="method" value="X-ray"/>
    <property type="resolution" value="1.95 A"/>
    <property type="chains" value="A=1-111"/>
</dbReference>
<dbReference type="PDB" id="2J70">
    <property type="method" value="X-ray"/>
    <property type="resolution" value="1.95 A"/>
    <property type="chains" value="A=1-111"/>
</dbReference>
<dbReference type="PDBsum" id="1W53"/>
<dbReference type="PDBsum" id="2J6Y"/>
<dbReference type="PDBsum" id="2J6Z"/>
<dbReference type="PDBsum" id="2J70"/>
<dbReference type="SMR" id="P40399"/>
<dbReference type="DIP" id="DIP-410N"/>
<dbReference type="FunCoup" id="P40399">
    <property type="interactions" value="61"/>
</dbReference>
<dbReference type="STRING" id="224308.BSU04700"/>
<dbReference type="PaxDb" id="224308-BSU04700"/>
<dbReference type="DNASU" id="939939"/>
<dbReference type="EnsemblBacteria" id="CAB12277">
    <property type="protein sequence ID" value="CAB12277"/>
    <property type="gene ID" value="BSU_04700"/>
</dbReference>
<dbReference type="GeneID" id="939939"/>
<dbReference type="KEGG" id="bsu:BSU04700"/>
<dbReference type="PATRIC" id="fig|224308.179.peg.498"/>
<dbReference type="eggNOG" id="COG2208">
    <property type="taxonomic scope" value="Bacteria"/>
</dbReference>
<dbReference type="InParanoid" id="P40399"/>
<dbReference type="OrthoDB" id="311592at2"/>
<dbReference type="PhylomeDB" id="P40399"/>
<dbReference type="BioCyc" id="BSUB:BSU04700-MONOMER"/>
<dbReference type="BRENDA" id="3.1.3.3">
    <property type="organism ID" value="658"/>
</dbReference>
<dbReference type="EvolutionaryTrace" id="P40399"/>
<dbReference type="Proteomes" id="UP000001570">
    <property type="component" value="Chromosome"/>
</dbReference>
<dbReference type="GO" id="GO:0036424">
    <property type="term" value="F:L-phosphoserine phosphatase activity"/>
    <property type="evidence" value="ECO:0007669"/>
    <property type="project" value="RHEA"/>
</dbReference>
<dbReference type="GO" id="GO:0016791">
    <property type="term" value="F:phosphatase activity"/>
    <property type="evidence" value="ECO:0000318"/>
    <property type="project" value="GO_Central"/>
</dbReference>
<dbReference type="GO" id="GO:0004721">
    <property type="term" value="F:phosphoprotein phosphatase activity"/>
    <property type="evidence" value="ECO:0007669"/>
    <property type="project" value="UniProtKB-KW"/>
</dbReference>
<dbReference type="FunFam" id="3.60.40.10:FF:000045">
    <property type="entry name" value="Stage II sporulation protein E"/>
    <property type="match status" value="1"/>
</dbReference>
<dbReference type="Gene3D" id="1.10.1240.30">
    <property type="entry name" value="KaiA/RbsU domain"/>
    <property type="match status" value="1"/>
</dbReference>
<dbReference type="Gene3D" id="3.60.40.10">
    <property type="entry name" value="PPM-type phosphatase domain"/>
    <property type="match status" value="1"/>
</dbReference>
<dbReference type="InterPro" id="IPR052016">
    <property type="entry name" value="Bact_Sigma-Reg"/>
</dbReference>
<dbReference type="InterPro" id="IPR017944">
    <property type="entry name" value="KaiA/RbsU_helical_domain_sf"/>
</dbReference>
<dbReference type="InterPro" id="IPR036457">
    <property type="entry name" value="PPM-type-like_dom_sf"/>
</dbReference>
<dbReference type="InterPro" id="IPR001932">
    <property type="entry name" value="PPM-type_phosphatase-like_dom"/>
</dbReference>
<dbReference type="InterPro" id="IPR014787">
    <property type="entry name" value="PSer_Pase_RsbU_N"/>
</dbReference>
<dbReference type="PANTHER" id="PTHR43156:SF15">
    <property type="entry name" value="PHOSPHOSERINE PHOSPHATASE RSBU"/>
    <property type="match status" value="1"/>
</dbReference>
<dbReference type="PANTHER" id="PTHR43156">
    <property type="entry name" value="STAGE II SPORULATION PROTEIN E-RELATED"/>
    <property type="match status" value="1"/>
</dbReference>
<dbReference type="Pfam" id="PF08673">
    <property type="entry name" value="RsbU_N"/>
    <property type="match status" value="1"/>
</dbReference>
<dbReference type="Pfam" id="PF07228">
    <property type="entry name" value="SpoIIE"/>
    <property type="match status" value="1"/>
</dbReference>
<dbReference type="SMART" id="SM00331">
    <property type="entry name" value="PP2C_SIG"/>
    <property type="match status" value="1"/>
</dbReference>
<dbReference type="SUPFAM" id="SSF101215">
    <property type="entry name" value="KaiA/RbsU domain"/>
    <property type="match status" value="1"/>
</dbReference>
<dbReference type="SUPFAM" id="SSF81606">
    <property type="entry name" value="PP2C-like"/>
    <property type="match status" value="1"/>
</dbReference>
<dbReference type="PROSITE" id="PS51746">
    <property type="entry name" value="PPM_2"/>
    <property type="match status" value="1"/>
</dbReference>
<gene>
    <name type="primary">rsbU</name>
    <name type="ordered locus">BSU04700</name>
</gene>
<comment type="function">
    <text evidence="2">Positive regulator of sigma-B activity. Dephosphorylates RsbV in response to environmental stress conveyed from the RsbXST module.</text>
</comment>
<comment type="catalytic activity">
    <reaction>
        <text>O-phospho-L-serine + H2O = L-serine + phosphate</text>
        <dbReference type="Rhea" id="RHEA:21208"/>
        <dbReference type="ChEBI" id="CHEBI:15377"/>
        <dbReference type="ChEBI" id="CHEBI:33384"/>
        <dbReference type="ChEBI" id="CHEBI:43474"/>
        <dbReference type="ChEBI" id="CHEBI:57524"/>
        <dbReference type="EC" id="3.1.3.3"/>
    </reaction>
</comment>
<comment type="catalytic activity">
    <reaction>
        <text>O-phospho-D-serine + H2O = D-serine + phosphate</text>
        <dbReference type="Rhea" id="RHEA:24873"/>
        <dbReference type="ChEBI" id="CHEBI:15377"/>
        <dbReference type="ChEBI" id="CHEBI:35247"/>
        <dbReference type="ChEBI" id="CHEBI:43474"/>
        <dbReference type="ChEBI" id="CHEBI:58680"/>
        <dbReference type="EC" id="3.1.3.3"/>
    </reaction>
</comment>
<comment type="activity regulation">
    <text evidence="3">Stimulated by a long-lived interaction with RsbT.</text>
</comment>